<sequence length="335" mass="36482">MSPSATDTTEGVDPTILTLRKVLTSESEPLARRFRALFSLKHLACLQPPTEKTLPAIQAIAAAFTSPSALLKHELAYCLGQTRNPESVPFLQQVAKDTEQDTMCRHEAAEALGALGYEDSLEILKALRDNQNESDVIRETCDIAVDRILWENSEARKAEKLKTSDFTSIDPAPPLPMTASEPSIPEIEKTLLDTSLPLFLRYRAMFALRDLASPPDLPTATRAVEALAKGLKDPSALFRHEIAFVFGQLCHPASIPSLTEALSNQSEAGMVRHEAAEALGSLGDCEGVEETLRKFLNDPEQVVRDSVIVALDMAEYEKNGEVEYALVPDAGVAAA</sequence>
<organism>
    <name type="scientific">Neosartorya fischeri (strain ATCC 1020 / DSM 3700 / CBS 544.65 / FGSC A1164 / JCM 1740 / NRRL 181 / WB 181)</name>
    <name type="common">Aspergillus fischerianus</name>
    <dbReference type="NCBI Taxonomy" id="331117"/>
    <lineage>
        <taxon>Eukaryota</taxon>
        <taxon>Fungi</taxon>
        <taxon>Dikarya</taxon>
        <taxon>Ascomycota</taxon>
        <taxon>Pezizomycotina</taxon>
        <taxon>Eurotiomycetes</taxon>
        <taxon>Eurotiomycetidae</taxon>
        <taxon>Eurotiales</taxon>
        <taxon>Aspergillaceae</taxon>
        <taxon>Aspergillus</taxon>
        <taxon>Aspergillus subgen. Fumigati</taxon>
    </lineage>
</organism>
<protein>
    <recommendedName>
        <fullName evidence="1">Deoxyhypusine hydroxylase</fullName>
        <shortName evidence="1">DOHH</shortName>
        <ecNumber evidence="1">1.14.99.29</ecNumber>
    </recommendedName>
    <alternativeName>
        <fullName evidence="1">Deoxyhypusine dioxygenase</fullName>
    </alternativeName>
    <alternativeName>
        <fullName evidence="1">Deoxyhypusine monooxygenase</fullName>
    </alternativeName>
</protein>
<name>DOHH_NEOFI</name>
<reference key="1">
    <citation type="journal article" date="2008" name="PLoS Genet.">
        <title>Genomic islands in the pathogenic filamentous fungus Aspergillus fumigatus.</title>
        <authorList>
            <person name="Fedorova N.D."/>
            <person name="Khaldi N."/>
            <person name="Joardar V.S."/>
            <person name="Maiti R."/>
            <person name="Amedeo P."/>
            <person name="Anderson M.J."/>
            <person name="Crabtree J."/>
            <person name="Silva J.C."/>
            <person name="Badger J.H."/>
            <person name="Albarraq A."/>
            <person name="Angiuoli S."/>
            <person name="Bussey H."/>
            <person name="Bowyer P."/>
            <person name="Cotty P.J."/>
            <person name="Dyer P.S."/>
            <person name="Egan A."/>
            <person name="Galens K."/>
            <person name="Fraser-Liggett C.M."/>
            <person name="Haas B.J."/>
            <person name="Inman J.M."/>
            <person name="Kent R."/>
            <person name="Lemieux S."/>
            <person name="Malavazi I."/>
            <person name="Orvis J."/>
            <person name="Roemer T."/>
            <person name="Ronning C.M."/>
            <person name="Sundaram J.P."/>
            <person name="Sutton G."/>
            <person name="Turner G."/>
            <person name="Venter J.C."/>
            <person name="White O.R."/>
            <person name="Whitty B.R."/>
            <person name="Youngman P."/>
            <person name="Wolfe K.H."/>
            <person name="Goldman G.H."/>
            <person name="Wortman J.R."/>
            <person name="Jiang B."/>
            <person name="Denning D.W."/>
            <person name="Nierman W.C."/>
        </authorList>
    </citation>
    <scope>NUCLEOTIDE SEQUENCE [LARGE SCALE GENOMIC DNA]</scope>
    <source>
        <strain>ATCC 1020 / DSM 3700 / CBS 544.65 / FGSC A1164 / JCM 1740 / NRRL 181 / WB 181</strain>
    </source>
</reference>
<proteinExistence type="inferred from homology"/>
<accession>A1DFW7</accession>
<gene>
    <name type="primary">lia1</name>
    <name type="ORF">NFIA_082210</name>
</gene>
<keyword id="KW-0963">Cytoplasm</keyword>
<keyword id="KW-0386">Hypusine biosynthesis</keyword>
<keyword id="KW-0408">Iron</keyword>
<keyword id="KW-0479">Metal-binding</keyword>
<keyword id="KW-0503">Monooxygenase</keyword>
<keyword id="KW-0539">Nucleus</keyword>
<keyword id="KW-0560">Oxidoreductase</keyword>
<keyword id="KW-1185">Reference proteome</keyword>
<keyword id="KW-0677">Repeat</keyword>
<evidence type="ECO:0000255" key="1">
    <source>
        <dbReference type="HAMAP-Rule" id="MF_03101"/>
    </source>
</evidence>
<dbReference type="EC" id="1.14.99.29" evidence="1"/>
<dbReference type="EMBL" id="DS027696">
    <property type="protein sequence ID" value="EAW18274.1"/>
    <property type="molecule type" value="Genomic_DNA"/>
</dbReference>
<dbReference type="RefSeq" id="XP_001260171.1">
    <property type="nucleotide sequence ID" value="XM_001260170.1"/>
</dbReference>
<dbReference type="SMR" id="A1DFW7"/>
<dbReference type="STRING" id="331117.A1DFW7"/>
<dbReference type="EnsemblFungi" id="EAW18274">
    <property type="protein sequence ID" value="EAW18274"/>
    <property type="gene ID" value="NFIA_082210"/>
</dbReference>
<dbReference type="GeneID" id="4586728"/>
<dbReference type="KEGG" id="nfi:NFIA_082210"/>
<dbReference type="VEuPathDB" id="FungiDB:NFIA_082210"/>
<dbReference type="eggNOG" id="KOG0567">
    <property type="taxonomic scope" value="Eukaryota"/>
</dbReference>
<dbReference type="HOGENOM" id="CLU_053974_0_0_1"/>
<dbReference type="OMA" id="LQEPCSI"/>
<dbReference type="OrthoDB" id="421002at2759"/>
<dbReference type="UniPathway" id="UPA00354"/>
<dbReference type="Proteomes" id="UP000006702">
    <property type="component" value="Unassembled WGS sequence"/>
</dbReference>
<dbReference type="GO" id="GO:0005737">
    <property type="term" value="C:cytoplasm"/>
    <property type="evidence" value="ECO:0007669"/>
    <property type="project" value="UniProtKB-SubCell"/>
</dbReference>
<dbReference type="GO" id="GO:0005634">
    <property type="term" value="C:nucleus"/>
    <property type="evidence" value="ECO:0007669"/>
    <property type="project" value="UniProtKB-SubCell"/>
</dbReference>
<dbReference type="GO" id="GO:0019135">
    <property type="term" value="F:deoxyhypusine monooxygenase activity"/>
    <property type="evidence" value="ECO:0007669"/>
    <property type="project" value="UniProtKB-UniRule"/>
</dbReference>
<dbReference type="GO" id="GO:0046872">
    <property type="term" value="F:metal ion binding"/>
    <property type="evidence" value="ECO:0007669"/>
    <property type="project" value="UniProtKB-KW"/>
</dbReference>
<dbReference type="Gene3D" id="1.25.10.10">
    <property type="entry name" value="Leucine-rich Repeat Variant"/>
    <property type="match status" value="2"/>
</dbReference>
<dbReference type="HAMAP" id="MF_03101">
    <property type="entry name" value="Deoxyhypusine_hydroxylase"/>
    <property type="match status" value="1"/>
</dbReference>
<dbReference type="InterPro" id="IPR011989">
    <property type="entry name" value="ARM-like"/>
</dbReference>
<dbReference type="InterPro" id="IPR016024">
    <property type="entry name" value="ARM-type_fold"/>
</dbReference>
<dbReference type="InterPro" id="IPR027517">
    <property type="entry name" value="Deoxyhypusine_hydroxylase"/>
</dbReference>
<dbReference type="InterPro" id="IPR004155">
    <property type="entry name" value="PBS_lyase_HEAT"/>
</dbReference>
<dbReference type="PANTHER" id="PTHR12697:SF5">
    <property type="entry name" value="DEOXYHYPUSINE HYDROXYLASE"/>
    <property type="match status" value="1"/>
</dbReference>
<dbReference type="PANTHER" id="PTHR12697">
    <property type="entry name" value="PBS LYASE HEAT-LIKE PROTEIN"/>
    <property type="match status" value="1"/>
</dbReference>
<dbReference type="Pfam" id="PF13646">
    <property type="entry name" value="HEAT_2"/>
    <property type="match status" value="2"/>
</dbReference>
<dbReference type="SMART" id="SM00567">
    <property type="entry name" value="EZ_HEAT"/>
    <property type="match status" value="6"/>
</dbReference>
<dbReference type="SUPFAM" id="SSF48371">
    <property type="entry name" value="ARM repeat"/>
    <property type="match status" value="1"/>
</dbReference>
<comment type="function">
    <text evidence="1">Catalyzes the hydroxylation of the N(6)-(4-aminobutyl)-L-lysine intermediate to form hypusine, an essential post-translational modification only found in mature eIF-5A factor.</text>
</comment>
<comment type="catalytic activity">
    <reaction evidence="1">
        <text>[eIF5A protein]-deoxyhypusine + AH2 + O2 = [eIF5A protein]-hypusine + A + H2O</text>
        <dbReference type="Rhea" id="RHEA:14101"/>
        <dbReference type="Rhea" id="RHEA-COMP:10144"/>
        <dbReference type="Rhea" id="RHEA-COMP:12592"/>
        <dbReference type="ChEBI" id="CHEBI:13193"/>
        <dbReference type="ChEBI" id="CHEBI:15377"/>
        <dbReference type="ChEBI" id="CHEBI:15379"/>
        <dbReference type="ChEBI" id="CHEBI:17499"/>
        <dbReference type="ChEBI" id="CHEBI:82657"/>
        <dbReference type="ChEBI" id="CHEBI:91175"/>
        <dbReference type="EC" id="1.14.99.29"/>
    </reaction>
</comment>
<comment type="cofactor">
    <cofactor evidence="1">
        <name>Fe(2+)</name>
        <dbReference type="ChEBI" id="CHEBI:29033"/>
    </cofactor>
    <text evidence="1">Binds 2 Fe(2+) ions per subunit.</text>
</comment>
<comment type="pathway">
    <text evidence="1">Protein modification; eIF5A hypusination.</text>
</comment>
<comment type="subcellular location">
    <subcellularLocation>
        <location evidence="1">Cytoplasm</location>
    </subcellularLocation>
    <subcellularLocation>
        <location evidence="1">Nucleus</location>
    </subcellularLocation>
</comment>
<comment type="similarity">
    <text evidence="1">Belongs to the deoxyhypusine hydroxylase family.</text>
</comment>
<feature type="chain" id="PRO_0000283669" description="Deoxyhypusine hydroxylase">
    <location>
        <begin position="1"/>
        <end position="335"/>
    </location>
</feature>
<feature type="repeat" description="HEAT-like PBS-type 1">
    <location>
        <begin position="71"/>
        <end position="97"/>
    </location>
</feature>
<feature type="repeat" description="HEAT-like PBS-type 2">
    <location>
        <begin position="104"/>
        <end position="130"/>
    </location>
</feature>
<feature type="repeat" description="HEAT-like PBS-type 3">
    <location>
        <begin position="200"/>
        <end position="233"/>
    </location>
</feature>
<feature type="repeat" description="HEAT-like PBS-type 4">
    <location>
        <begin position="238"/>
        <end position="264"/>
    </location>
</feature>
<feature type="repeat" description="HEAT-like PBS-type 5">
    <location>
        <begin position="271"/>
        <end position="298"/>
    </location>
</feature>
<feature type="binding site" evidence="1">
    <location>
        <position position="73"/>
    </location>
    <ligand>
        <name>Fe cation</name>
        <dbReference type="ChEBI" id="CHEBI:24875"/>
        <label>1</label>
    </ligand>
</feature>
<feature type="binding site" evidence="1">
    <location>
        <position position="74"/>
    </location>
    <ligand>
        <name>Fe cation</name>
        <dbReference type="ChEBI" id="CHEBI:24875"/>
        <label>1</label>
    </ligand>
</feature>
<feature type="binding site" evidence="1">
    <location>
        <position position="106"/>
    </location>
    <ligand>
        <name>Fe cation</name>
        <dbReference type="ChEBI" id="CHEBI:24875"/>
        <label>1</label>
    </ligand>
</feature>
<feature type="binding site" evidence="1">
    <location>
        <position position="107"/>
    </location>
    <ligand>
        <name>Fe cation</name>
        <dbReference type="ChEBI" id="CHEBI:24875"/>
        <label>1</label>
    </ligand>
</feature>
<feature type="binding site" evidence="1">
    <location>
        <position position="240"/>
    </location>
    <ligand>
        <name>Fe cation</name>
        <dbReference type="ChEBI" id="CHEBI:24875"/>
        <label>2</label>
    </ligand>
</feature>
<feature type="binding site" evidence="1">
    <location>
        <position position="241"/>
    </location>
    <ligand>
        <name>Fe cation</name>
        <dbReference type="ChEBI" id="CHEBI:24875"/>
        <label>2</label>
    </ligand>
</feature>
<feature type="binding site" evidence="1">
    <location>
        <position position="273"/>
    </location>
    <ligand>
        <name>Fe cation</name>
        <dbReference type="ChEBI" id="CHEBI:24875"/>
        <label>2</label>
    </ligand>
</feature>
<feature type="binding site" evidence="1">
    <location>
        <position position="274"/>
    </location>
    <ligand>
        <name>Fe cation</name>
        <dbReference type="ChEBI" id="CHEBI:24875"/>
        <label>2</label>
    </ligand>
</feature>